<proteinExistence type="evidence at protein level"/>
<reference key="1">
    <citation type="journal article" date="2002" name="Nature">
        <title>The genome sequence of Schizosaccharomyces pombe.</title>
        <authorList>
            <person name="Wood V."/>
            <person name="Gwilliam R."/>
            <person name="Rajandream M.A."/>
            <person name="Lyne M.H."/>
            <person name="Lyne R."/>
            <person name="Stewart A."/>
            <person name="Sgouros J.G."/>
            <person name="Peat N."/>
            <person name="Hayles J."/>
            <person name="Baker S.G."/>
            <person name="Basham D."/>
            <person name="Bowman S."/>
            <person name="Brooks K."/>
            <person name="Brown D."/>
            <person name="Brown S."/>
            <person name="Chillingworth T."/>
            <person name="Churcher C.M."/>
            <person name="Collins M."/>
            <person name="Connor R."/>
            <person name="Cronin A."/>
            <person name="Davis P."/>
            <person name="Feltwell T."/>
            <person name="Fraser A."/>
            <person name="Gentles S."/>
            <person name="Goble A."/>
            <person name="Hamlin N."/>
            <person name="Harris D.E."/>
            <person name="Hidalgo J."/>
            <person name="Hodgson G."/>
            <person name="Holroyd S."/>
            <person name="Hornsby T."/>
            <person name="Howarth S."/>
            <person name="Huckle E.J."/>
            <person name="Hunt S."/>
            <person name="Jagels K."/>
            <person name="James K.D."/>
            <person name="Jones L."/>
            <person name="Jones M."/>
            <person name="Leather S."/>
            <person name="McDonald S."/>
            <person name="McLean J."/>
            <person name="Mooney P."/>
            <person name="Moule S."/>
            <person name="Mungall K.L."/>
            <person name="Murphy L.D."/>
            <person name="Niblett D."/>
            <person name="Odell C."/>
            <person name="Oliver K."/>
            <person name="O'Neil S."/>
            <person name="Pearson D."/>
            <person name="Quail M.A."/>
            <person name="Rabbinowitsch E."/>
            <person name="Rutherford K.M."/>
            <person name="Rutter S."/>
            <person name="Saunders D."/>
            <person name="Seeger K."/>
            <person name="Sharp S."/>
            <person name="Skelton J."/>
            <person name="Simmonds M.N."/>
            <person name="Squares R."/>
            <person name="Squares S."/>
            <person name="Stevens K."/>
            <person name="Taylor K."/>
            <person name="Taylor R.G."/>
            <person name="Tivey A."/>
            <person name="Walsh S.V."/>
            <person name="Warren T."/>
            <person name="Whitehead S."/>
            <person name="Woodward J.R."/>
            <person name="Volckaert G."/>
            <person name="Aert R."/>
            <person name="Robben J."/>
            <person name="Grymonprez B."/>
            <person name="Weltjens I."/>
            <person name="Vanstreels E."/>
            <person name="Rieger M."/>
            <person name="Schaefer M."/>
            <person name="Mueller-Auer S."/>
            <person name="Gabel C."/>
            <person name="Fuchs M."/>
            <person name="Duesterhoeft A."/>
            <person name="Fritzc C."/>
            <person name="Holzer E."/>
            <person name="Moestl D."/>
            <person name="Hilbert H."/>
            <person name="Borzym K."/>
            <person name="Langer I."/>
            <person name="Beck A."/>
            <person name="Lehrach H."/>
            <person name="Reinhardt R."/>
            <person name="Pohl T.M."/>
            <person name="Eger P."/>
            <person name="Zimmermann W."/>
            <person name="Wedler H."/>
            <person name="Wambutt R."/>
            <person name="Purnelle B."/>
            <person name="Goffeau A."/>
            <person name="Cadieu E."/>
            <person name="Dreano S."/>
            <person name="Gloux S."/>
            <person name="Lelaure V."/>
            <person name="Mottier S."/>
            <person name="Galibert F."/>
            <person name="Aves S.J."/>
            <person name="Xiang Z."/>
            <person name="Hunt C."/>
            <person name="Moore K."/>
            <person name="Hurst S.M."/>
            <person name="Lucas M."/>
            <person name="Rochet M."/>
            <person name="Gaillardin C."/>
            <person name="Tallada V.A."/>
            <person name="Garzon A."/>
            <person name="Thode G."/>
            <person name="Daga R.R."/>
            <person name="Cruzado L."/>
            <person name="Jimenez J."/>
            <person name="Sanchez M."/>
            <person name="del Rey F."/>
            <person name="Benito J."/>
            <person name="Dominguez A."/>
            <person name="Revuelta J.L."/>
            <person name="Moreno S."/>
            <person name="Armstrong J."/>
            <person name="Forsburg S.L."/>
            <person name="Cerutti L."/>
            <person name="Lowe T."/>
            <person name="McCombie W.R."/>
            <person name="Paulsen I."/>
            <person name="Potashkin J."/>
            <person name="Shpakovski G.V."/>
            <person name="Ussery D."/>
            <person name="Barrell B.G."/>
            <person name="Nurse P."/>
        </authorList>
    </citation>
    <scope>NUCLEOTIDE SEQUENCE [LARGE SCALE GENOMIC DNA]</scope>
    <source>
        <strain>972 / ATCC 24843</strain>
    </source>
</reference>
<reference key="2">
    <citation type="journal article" date="2005" name="EMBO J.">
        <title>Molecular analysis of kinetochore architecture in fission yeast.</title>
        <authorList>
            <person name="Liu X."/>
            <person name="McLeod I."/>
            <person name="Anderson S."/>
            <person name="Yates J.R. III"/>
            <person name="He X."/>
        </authorList>
    </citation>
    <scope>IDENTIFICATION IN THE NMS COMPLEX</scope>
</reference>
<reference key="3">
    <citation type="journal article" date="2006" name="Mol. Biol. Cell">
        <title>Reconstruction of the kinetochore during meiosis in fission yeast Schizosaccharomyces pombe.</title>
        <authorList>
            <person name="Hayashi A."/>
            <person name="Asakawa H."/>
            <person name="Haraguchi T."/>
            <person name="Hiraoka Y."/>
        </authorList>
    </citation>
    <scope>IDENTIFICATION IN THE NMS COMPLEX</scope>
</reference>
<reference key="4">
    <citation type="journal article" date="2006" name="Nat. Biotechnol.">
        <title>ORFeome cloning and global analysis of protein localization in the fission yeast Schizosaccharomyces pombe.</title>
        <authorList>
            <person name="Matsuyama A."/>
            <person name="Arai R."/>
            <person name="Yashiroda Y."/>
            <person name="Shirai A."/>
            <person name="Kamata A."/>
            <person name="Sekido S."/>
            <person name="Kobayashi Y."/>
            <person name="Hashimoto A."/>
            <person name="Hamamoto M."/>
            <person name="Hiraoka Y."/>
            <person name="Horinouchi S."/>
            <person name="Yoshida M."/>
        </authorList>
    </citation>
    <scope>SUBCELLULAR LOCATION [LARGE SCALE ANALYSIS]</scope>
</reference>
<sequence length="329" mass="36798">MKRKPEEQEGFVFVRKGKEKAGSKRRKSSVEDDPDTSQTDGLVELPVSDTPIVKRNKELRKGKGRRSSLDQRGKRASSIGTGFEALPHADVPSHEYYRHISKDLSEPLRIKQLLLWASSKALEEQRKKYGETEEASEAAIARSIVQEVLNELLANKVSVSWYQRPPDAVIPNKPHPQNLKNAQLVDELSAKLTQLHNEEAAWRAVAANSVSSDKSILSFKKAVESIDSKQDLDKQDSPLPPDDAPELPNISKLKPKFHTLLDMLAENIHTLHSLTNAGPEVRSSYGRLAAQDFIAHRKSLLSFSKYVDTMNLLRLLSEASYKSSSNESV</sequence>
<organism>
    <name type="scientific">Schizosaccharomyces pombe (strain 972 / ATCC 24843)</name>
    <name type="common">Fission yeast</name>
    <dbReference type="NCBI Taxonomy" id="284812"/>
    <lineage>
        <taxon>Eukaryota</taxon>
        <taxon>Fungi</taxon>
        <taxon>Dikarya</taxon>
        <taxon>Ascomycota</taxon>
        <taxon>Taphrinomycotina</taxon>
        <taxon>Schizosaccharomycetes</taxon>
        <taxon>Schizosaccharomycetales</taxon>
        <taxon>Schizosaccharomycetaceae</taxon>
        <taxon>Schizosaccharomyces</taxon>
    </lineage>
</organism>
<evidence type="ECO:0000256" key="1">
    <source>
        <dbReference type="SAM" id="MobiDB-lite"/>
    </source>
</evidence>
<evidence type="ECO:0000269" key="2">
    <source>
    </source>
</evidence>
<evidence type="ECO:0000269" key="3">
    <source>
    </source>
</evidence>
<evidence type="ECO:0000269" key="4">
    <source>
    </source>
</evidence>
<keyword id="KW-0131">Cell cycle</keyword>
<keyword id="KW-0132">Cell division</keyword>
<keyword id="KW-0469">Meiosis</keyword>
<keyword id="KW-0498">Mitosis</keyword>
<keyword id="KW-0539">Nucleus</keyword>
<keyword id="KW-1185">Reference proteome</keyword>
<feature type="chain" id="PRO_0000290643" description="Kinetochore protein mis13">
    <location>
        <begin position="1"/>
        <end position="329"/>
    </location>
</feature>
<feature type="region of interest" description="Disordered" evidence="1">
    <location>
        <begin position="1"/>
        <end position="81"/>
    </location>
</feature>
<feature type="region of interest" description="Disordered" evidence="1">
    <location>
        <begin position="228"/>
        <end position="249"/>
    </location>
</feature>
<feature type="compositionally biased region" description="Basic residues" evidence="1">
    <location>
        <begin position="15"/>
        <end position="27"/>
    </location>
</feature>
<feature type="compositionally biased region" description="Basic and acidic residues" evidence="1">
    <location>
        <begin position="55"/>
        <end position="73"/>
    </location>
</feature>
<gene>
    <name type="primary">mis13</name>
    <name type="synonym">cnl1</name>
    <name type="synonym">cnl3</name>
    <name type="ORF">SPBC409.09c</name>
</gene>
<comment type="function">
    <text>Acts as a component of the NMS (Ndc80-MIND-Spc7) super complex which has a role in kinetochore function during late meiotic prophase and throughout the mitotic cell cycle. Required for correct segregation of chromosomes and for maintaining the inner centromere structure.</text>
</comment>
<comment type="subunit">
    <text evidence="2 4">Component of the NMS super complex which consists of mis12, mis13, mis14, ndc80, nnf1, nuf2, sos7, spc7, spc24 and spc25. Interacts with dis1, mal2, mis14, ppe1 and ekc1.</text>
</comment>
<comment type="subcellular location">
    <subcellularLocation>
        <location evidence="3">Nucleus</location>
    </subcellularLocation>
</comment>
<dbReference type="EMBL" id="CU329671">
    <property type="protein sequence ID" value="CAB52611.1"/>
    <property type="molecule type" value="Genomic_DNA"/>
</dbReference>
<dbReference type="PIR" id="T40436">
    <property type="entry name" value="T40436"/>
</dbReference>
<dbReference type="RefSeq" id="NP_595459.1">
    <property type="nucleotide sequence ID" value="NM_001021369.2"/>
</dbReference>
<dbReference type="SMR" id="Q9UUB5"/>
<dbReference type="BioGRID" id="277562">
    <property type="interactions" value="10"/>
</dbReference>
<dbReference type="FunCoup" id="Q9UUB5">
    <property type="interactions" value="1"/>
</dbReference>
<dbReference type="IntAct" id="Q9UUB5">
    <property type="interactions" value="1"/>
</dbReference>
<dbReference type="STRING" id="284812.Q9UUB5"/>
<dbReference type="iPTMnet" id="Q9UUB5"/>
<dbReference type="PaxDb" id="4896-SPBC409.09c.1"/>
<dbReference type="EnsemblFungi" id="SPBC409.09c.1">
    <property type="protein sequence ID" value="SPBC409.09c.1:pep"/>
    <property type="gene ID" value="SPBC409.09c"/>
</dbReference>
<dbReference type="GeneID" id="2541047"/>
<dbReference type="KEGG" id="spo:2541047"/>
<dbReference type="PomBase" id="SPBC409.09c">
    <property type="gene designation" value="mis13"/>
</dbReference>
<dbReference type="VEuPathDB" id="FungiDB:SPBC409.09c"/>
<dbReference type="eggNOG" id="ENOG502S2VJ">
    <property type="taxonomic scope" value="Eukaryota"/>
</dbReference>
<dbReference type="HOGENOM" id="CLU_052069_0_0_1"/>
<dbReference type="InParanoid" id="Q9UUB5"/>
<dbReference type="OMA" id="IPNKPHP"/>
<dbReference type="PhylomeDB" id="Q9UUB5"/>
<dbReference type="Reactome" id="R-SPO-6798695">
    <property type="pathway name" value="Neutrophil degranulation"/>
</dbReference>
<dbReference type="PRO" id="PR:Q9UUB5"/>
<dbReference type="Proteomes" id="UP000002485">
    <property type="component" value="Chromosome II"/>
</dbReference>
<dbReference type="GO" id="GO:0000779">
    <property type="term" value="C:condensed chromosome, centromeric region"/>
    <property type="evidence" value="ECO:0000314"/>
    <property type="project" value="PomBase"/>
</dbReference>
<dbReference type="GO" id="GO:0000776">
    <property type="term" value="C:kinetochore"/>
    <property type="evidence" value="ECO:0000314"/>
    <property type="project" value="PomBase"/>
</dbReference>
<dbReference type="GO" id="GO:0000444">
    <property type="term" value="C:MIS12/MIND type complex"/>
    <property type="evidence" value="ECO:0000250"/>
    <property type="project" value="UniProtKB"/>
</dbReference>
<dbReference type="GO" id="GO:0005634">
    <property type="term" value="C:nucleus"/>
    <property type="evidence" value="ECO:0007005"/>
    <property type="project" value="PomBase"/>
</dbReference>
<dbReference type="GO" id="GO:0051315">
    <property type="term" value="P:attachment of mitotic spindle microtubules to kinetochore"/>
    <property type="evidence" value="ECO:0000305"/>
    <property type="project" value="PomBase"/>
</dbReference>
<dbReference type="GO" id="GO:0051301">
    <property type="term" value="P:cell division"/>
    <property type="evidence" value="ECO:0007669"/>
    <property type="project" value="UniProtKB-KW"/>
</dbReference>
<dbReference type="GO" id="GO:0051455">
    <property type="term" value="P:spindle attachment to meiosis I kinetochore"/>
    <property type="evidence" value="ECO:0000305"/>
    <property type="project" value="PomBase"/>
</dbReference>
<dbReference type="InterPro" id="IPR013218">
    <property type="entry name" value="Dsn1/Mis13"/>
</dbReference>
<dbReference type="PANTHER" id="PTHR14778">
    <property type="entry name" value="KINETOCHORE-ASSOCIATED PROTEIN DSN1 HOMOLOG"/>
    <property type="match status" value="1"/>
</dbReference>
<dbReference type="PANTHER" id="PTHR14778:SF2">
    <property type="entry name" value="KINETOCHORE-ASSOCIATED PROTEIN DSN1 HOMOLOG"/>
    <property type="match status" value="1"/>
</dbReference>
<dbReference type="Pfam" id="PF08202">
    <property type="entry name" value="MIS13"/>
    <property type="match status" value="1"/>
</dbReference>
<name>MIS13_SCHPO</name>
<accession>Q9UUB5</accession>
<protein>
    <recommendedName>
        <fullName>Kinetochore protein mis13</fullName>
    </recommendedName>
    <alternativeName>
        <fullName>NMS complex subunit mis13</fullName>
    </alternativeName>
</protein>